<proteinExistence type="inferred from homology"/>
<sequence length="716" mass="76311">MLPEEDLKIIKKELGREPTLVEQGCFLNLWSEHCSYRSSAPLLKTFTTTGENVIIGPGDDAAIIKFEDGYVLAIGMESHNHPSYVDPYNGAATGVGGIVRDIISMGARPIALMDPLYFGPLDTPKNLFLFEQIIKGIAGYGNCIGVPVVNGETFFDRRYSGNPLVNVVAVGLCKEEKVMTSRSQKAGNKLILAGSSTGKDGLGGASFASRDLSESAEAEDRPSVQVGDPYTEKLVMEMTLEAIDKGYIKSCKDLGAAGLGGASSELAAKGGLGAYIIADAVPQREPEMNAYEILLAESQERMVFEVAPEDVDAVLALVQKYDLNGAVIGHLTEKPNYTVEFRGEIVADIPIGFLTGGAPTCEKPSEAPIHREEGKKPETPEDLKAAFMKVLSSHNIASKEWIYRQYDHEVQLRTVVKPGEDSGVLRITDKKGIALSCGCQPRATLLDPYTGGRTAIIENAMNLAVKGAEGLAIVNCLNFGNPENPETYWQFKNAVLGLGDAARELSIPVVGGNVSLYNESDEFRTAIPPTPSIGMIGKVDLETPLPSGFFAKTGDSIILVGETVPEMGGSEYYSCMGAGNAGKVPEVPKNAPEIIKAVIEAVKSGKLNSAHDISLGGIGAGLARMCKNMGGKVDVSEIAGGMKEDEFLFSEAPARALLATAEPEAVQELLKGVPHAVIGTVGGDALEIKGKDFELFISLEEIKNAHESLTKFMMMG</sequence>
<comment type="function">
    <text evidence="1">Part of the phosphoribosylformylglycinamidine synthase complex involved in the purines biosynthetic pathway. Catalyzes the ATP-dependent conversion of formylglycinamide ribonucleotide (FGAR) and glutamine to yield formylglycinamidine ribonucleotide (FGAM) and glutamate. The FGAM synthase complex is composed of three subunits. PurQ produces an ammonia molecule by converting glutamine to glutamate. PurL transfers the ammonia molecule to FGAR to form FGAM in an ATP-dependent manner. PurS interacts with PurQ and PurL and is thought to assist in the transfer of the ammonia molecule from PurQ to PurL.</text>
</comment>
<comment type="catalytic activity">
    <reaction evidence="1">
        <text>N(2)-formyl-N(1)-(5-phospho-beta-D-ribosyl)glycinamide + L-glutamine + ATP + H2O = 2-formamido-N(1)-(5-O-phospho-beta-D-ribosyl)acetamidine + L-glutamate + ADP + phosphate + H(+)</text>
        <dbReference type="Rhea" id="RHEA:17129"/>
        <dbReference type="ChEBI" id="CHEBI:15377"/>
        <dbReference type="ChEBI" id="CHEBI:15378"/>
        <dbReference type="ChEBI" id="CHEBI:29985"/>
        <dbReference type="ChEBI" id="CHEBI:30616"/>
        <dbReference type="ChEBI" id="CHEBI:43474"/>
        <dbReference type="ChEBI" id="CHEBI:58359"/>
        <dbReference type="ChEBI" id="CHEBI:147286"/>
        <dbReference type="ChEBI" id="CHEBI:147287"/>
        <dbReference type="ChEBI" id="CHEBI:456216"/>
        <dbReference type="EC" id="6.3.5.3"/>
    </reaction>
</comment>
<comment type="pathway">
    <text evidence="1">Purine metabolism; IMP biosynthesis via de novo pathway; 5-amino-1-(5-phospho-D-ribosyl)imidazole from N(2)-formyl-N(1)-(5-phospho-D-ribosyl)glycinamide: step 1/2.</text>
</comment>
<comment type="subunit">
    <text evidence="1">Monomer. Part of the FGAM synthase complex composed of 1 PurL, 1 PurQ and 2 PurS subunits.</text>
</comment>
<comment type="subcellular location">
    <subcellularLocation>
        <location evidence="1">Cytoplasm</location>
    </subcellularLocation>
</comment>
<comment type="similarity">
    <text evidence="1">Belongs to the FGAMS family.</text>
</comment>
<comment type="sequence caution" evidence="2">
    <conflict type="frameshift">
        <sequence resource="EMBL-CDS" id="AAM30556"/>
    </conflict>
</comment>
<accession>Q8PYK1</accession>
<keyword id="KW-0067">ATP-binding</keyword>
<keyword id="KW-0963">Cytoplasm</keyword>
<keyword id="KW-0436">Ligase</keyword>
<keyword id="KW-0460">Magnesium</keyword>
<keyword id="KW-0479">Metal-binding</keyword>
<keyword id="KW-0547">Nucleotide-binding</keyword>
<keyword id="KW-0658">Purine biosynthesis</keyword>
<organism>
    <name type="scientific">Methanosarcina mazei (strain ATCC BAA-159 / DSM 3647 / Goe1 / Go1 / JCM 11833 / OCM 88)</name>
    <name type="common">Methanosarcina frisia</name>
    <dbReference type="NCBI Taxonomy" id="192952"/>
    <lineage>
        <taxon>Archaea</taxon>
        <taxon>Methanobacteriati</taxon>
        <taxon>Methanobacteriota</taxon>
        <taxon>Stenosarchaea group</taxon>
        <taxon>Methanomicrobia</taxon>
        <taxon>Methanosarcinales</taxon>
        <taxon>Methanosarcinaceae</taxon>
        <taxon>Methanosarcina</taxon>
    </lineage>
</organism>
<name>PURL_METMA</name>
<reference key="1">
    <citation type="journal article" date="2002" name="J. Mol. Microbiol. Biotechnol.">
        <title>The genome of Methanosarcina mazei: evidence for lateral gene transfer between Bacteria and Archaea.</title>
        <authorList>
            <person name="Deppenmeier U."/>
            <person name="Johann A."/>
            <person name="Hartsch T."/>
            <person name="Merkl R."/>
            <person name="Schmitz R.A."/>
            <person name="Martinez-Arias R."/>
            <person name="Henne A."/>
            <person name="Wiezer A."/>
            <person name="Baeumer S."/>
            <person name="Jacobi C."/>
            <person name="Brueggemann H."/>
            <person name="Lienard T."/>
            <person name="Christmann A."/>
            <person name="Boemecke M."/>
            <person name="Steckel S."/>
            <person name="Bhattacharyya A."/>
            <person name="Lykidis A."/>
            <person name="Overbeek R."/>
            <person name="Klenk H.-P."/>
            <person name="Gunsalus R.P."/>
            <person name="Fritz H.-J."/>
            <person name="Gottschalk G."/>
        </authorList>
    </citation>
    <scope>NUCLEOTIDE SEQUENCE [LARGE SCALE GENOMIC DNA]</scope>
    <source>
        <strain>ATCC BAA-159 / DSM 3647 / Goe1 / Go1 / JCM 11833 / OCM 88</strain>
    </source>
</reference>
<feature type="chain" id="PRO_0000100515" description="Phosphoribosylformylglycinamidine synthase subunit PurL">
    <location>
        <begin position="1"/>
        <end position="716"/>
    </location>
</feature>
<feature type="active site" evidence="1">
    <location>
        <position position="33"/>
    </location>
</feature>
<feature type="active site" description="Proton acceptor" evidence="1">
    <location>
        <position position="79"/>
    </location>
</feature>
<feature type="binding site" evidence="1">
    <location>
        <position position="36"/>
    </location>
    <ligand>
        <name>ATP</name>
        <dbReference type="ChEBI" id="CHEBI:30616"/>
    </ligand>
</feature>
<feature type="binding site" evidence="1">
    <location>
        <position position="77"/>
    </location>
    <ligand>
        <name>Mg(2+)</name>
        <dbReference type="ChEBI" id="CHEBI:18420"/>
        <label>1</label>
    </ligand>
</feature>
<feature type="binding site" evidence="1">
    <location>
        <begin position="78"/>
        <end position="81"/>
    </location>
    <ligand>
        <name>substrate</name>
    </ligand>
</feature>
<feature type="binding site" evidence="1">
    <location>
        <position position="100"/>
    </location>
    <ligand>
        <name>substrate</name>
    </ligand>
</feature>
<feature type="binding site" evidence="1">
    <location>
        <position position="101"/>
    </location>
    <ligand>
        <name>Mg(2+)</name>
        <dbReference type="ChEBI" id="CHEBI:18420"/>
        <label>2</label>
    </ligand>
</feature>
<feature type="binding site" evidence="1">
    <location>
        <position position="225"/>
    </location>
    <ligand>
        <name>substrate</name>
    </ligand>
</feature>
<feature type="binding site" evidence="1">
    <location>
        <position position="253"/>
    </location>
    <ligand>
        <name>Mg(2+)</name>
        <dbReference type="ChEBI" id="CHEBI:18420"/>
        <label>2</label>
    </ligand>
</feature>
<feature type="binding site" evidence="1">
    <location>
        <begin position="297"/>
        <end position="299"/>
    </location>
    <ligand>
        <name>substrate</name>
    </ligand>
</feature>
<feature type="binding site" evidence="1">
    <location>
        <position position="475"/>
    </location>
    <ligand>
        <name>ATP</name>
        <dbReference type="ChEBI" id="CHEBI:30616"/>
    </ligand>
</feature>
<feature type="binding site" evidence="1">
    <location>
        <position position="512"/>
    </location>
    <ligand>
        <name>ATP</name>
        <dbReference type="ChEBI" id="CHEBI:30616"/>
    </ligand>
</feature>
<feature type="binding site" evidence="1">
    <location>
        <position position="513"/>
    </location>
    <ligand>
        <name>Mg(2+)</name>
        <dbReference type="ChEBI" id="CHEBI:18420"/>
        <label>1</label>
    </ligand>
</feature>
<feature type="binding site" evidence="1">
    <location>
        <position position="515"/>
    </location>
    <ligand>
        <name>substrate</name>
    </ligand>
</feature>
<protein>
    <recommendedName>
        <fullName evidence="1">Phosphoribosylformylglycinamidine synthase subunit PurL</fullName>
        <shortName evidence="1">FGAM synthase</shortName>
        <ecNumber evidence="1">6.3.5.3</ecNumber>
    </recommendedName>
    <alternativeName>
        <fullName evidence="1">Formylglycinamide ribonucleotide amidotransferase subunit II</fullName>
        <shortName evidence="1">FGAR amidotransferase II</shortName>
        <shortName evidence="1">FGAR-AT II</shortName>
    </alternativeName>
    <alternativeName>
        <fullName evidence="1">Glutamine amidotransferase PurL</fullName>
    </alternativeName>
    <alternativeName>
        <fullName evidence="1">Phosphoribosylformylglycinamidine synthase subunit II</fullName>
    </alternativeName>
</protein>
<gene>
    <name evidence="1" type="primary">purL</name>
    <name type="ordered locus">MM_0860</name>
</gene>
<evidence type="ECO:0000255" key="1">
    <source>
        <dbReference type="HAMAP-Rule" id="MF_00420"/>
    </source>
</evidence>
<evidence type="ECO:0000305" key="2"/>
<dbReference type="EC" id="6.3.5.3" evidence="1"/>
<dbReference type="EMBL" id="AE008384">
    <property type="protein sequence ID" value="AAM30556.1"/>
    <property type="status" value="ALT_FRAME"/>
    <property type="molecule type" value="Genomic_DNA"/>
</dbReference>
<dbReference type="SMR" id="Q8PYK1"/>
<dbReference type="KEGG" id="mma:MM_0860"/>
<dbReference type="PATRIC" id="fig|192952.21.peg.1018"/>
<dbReference type="eggNOG" id="arCOG00641">
    <property type="taxonomic scope" value="Archaea"/>
</dbReference>
<dbReference type="HOGENOM" id="CLU_003100_0_1_2"/>
<dbReference type="UniPathway" id="UPA00074">
    <property type="reaction ID" value="UER00128"/>
</dbReference>
<dbReference type="Proteomes" id="UP000000595">
    <property type="component" value="Chromosome"/>
</dbReference>
<dbReference type="GO" id="GO:0005737">
    <property type="term" value="C:cytoplasm"/>
    <property type="evidence" value="ECO:0007669"/>
    <property type="project" value="UniProtKB-SubCell"/>
</dbReference>
<dbReference type="GO" id="GO:0005524">
    <property type="term" value="F:ATP binding"/>
    <property type="evidence" value="ECO:0007669"/>
    <property type="project" value="UniProtKB-UniRule"/>
</dbReference>
<dbReference type="GO" id="GO:0000287">
    <property type="term" value="F:magnesium ion binding"/>
    <property type="evidence" value="ECO:0007669"/>
    <property type="project" value="UniProtKB-UniRule"/>
</dbReference>
<dbReference type="GO" id="GO:0004642">
    <property type="term" value="F:phosphoribosylformylglycinamidine synthase activity"/>
    <property type="evidence" value="ECO:0007669"/>
    <property type="project" value="UniProtKB-UniRule"/>
</dbReference>
<dbReference type="GO" id="GO:0006189">
    <property type="term" value="P:'de novo' IMP biosynthetic process"/>
    <property type="evidence" value="ECO:0007669"/>
    <property type="project" value="UniProtKB-UniRule"/>
</dbReference>
<dbReference type="CDD" id="cd02203">
    <property type="entry name" value="PurL_repeat1"/>
    <property type="match status" value="1"/>
</dbReference>
<dbReference type="CDD" id="cd02204">
    <property type="entry name" value="PurL_repeat2"/>
    <property type="match status" value="1"/>
</dbReference>
<dbReference type="FunFam" id="3.30.1330.10:FF:000004">
    <property type="entry name" value="Phosphoribosylformylglycinamidine synthase subunit PurL"/>
    <property type="match status" value="1"/>
</dbReference>
<dbReference type="Gene3D" id="3.90.650.10">
    <property type="entry name" value="PurM-like C-terminal domain"/>
    <property type="match status" value="2"/>
</dbReference>
<dbReference type="Gene3D" id="3.30.1330.10">
    <property type="entry name" value="PurM-like, N-terminal domain"/>
    <property type="match status" value="2"/>
</dbReference>
<dbReference type="HAMAP" id="MF_00420">
    <property type="entry name" value="PurL_2"/>
    <property type="match status" value="1"/>
</dbReference>
<dbReference type="InterPro" id="IPR010074">
    <property type="entry name" value="PRibForGlyAmidine_synth_PurL"/>
</dbReference>
<dbReference type="InterPro" id="IPR041609">
    <property type="entry name" value="PurL_linker"/>
</dbReference>
<dbReference type="InterPro" id="IPR010918">
    <property type="entry name" value="PurM-like_C_dom"/>
</dbReference>
<dbReference type="InterPro" id="IPR036676">
    <property type="entry name" value="PurM-like_C_sf"/>
</dbReference>
<dbReference type="InterPro" id="IPR016188">
    <property type="entry name" value="PurM-like_N"/>
</dbReference>
<dbReference type="InterPro" id="IPR036921">
    <property type="entry name" value="PurM-like_N_sf"/>
</dbReference>
<dbReference type="NCBIfam" id="TIGR01736">
    <property type="entry name" value="FGAM_synth_II"/>
    <property type="match status" value="1"/>
</dbReference>
<dbReference type="NCBIfam" id="NF002290">
    <property type="entry name" value="PRK01213.1"/>
    <property type="match status" value="1"/>
</dbReference>
<dbReference type="PANTHER" id="PTHR43555">
    <property type="entry name" value="PHOSPHORIBOSYLFORMYLGLYCINAMIDINE SYNTHASE SUBUNIT PURL"/>
    <property type="match status" value="1"/>
</dbReference>
<dbReference type="PANTHER" id="PTHR43555:SF1">
    <property type="entry name" value="PHOSPHORIBOSYLFORMYLGLYCINAMIDINE SYNTHASE SUBUNIT PURL"/>
    <property type="match status" value="1"/>
</dbReference>
<dbReference type="Pfam" id="PF00586">
    <property type="entry name" value="AIRS"/>
    <property type="match status" value="2"/>
</dbReference>
<dbReference type="Pfam" id="PF02769">
    <property type="entry name" value="AIRS_C"/>
    <property type="match status" value="2"/>
</dbReference>
<dbReference type="Pfam" id="PF18072">
    <property type="entry name" value="FGAR-AT_linker"/>
    <property type="match status" value="1"/>
</dbReference>
<dbReference type="PIRSF" id="PIRSF001587">
    <property type="entry name" value="FGAM_synthase_II"/>
    <property type="match status" value="1"/>
</dbReference>
<dbReference type="SUPFAM" id="SSF56042">
    <property type="entry name" value="PurM C-terminal domain-like"/>
    <property type="match status" value="2"/>
</dbReference>
<dbReference type="SUPFAM" id="SSF55326">
    <property type="entry name" value="PurM N-terminal domain-like"/>
    <property type="match status" value="2"/>
</dbReference>